<reference key="1">
    <citation type="journal article" date="2005" name="Gene">
        <title>Identification of two novel human genes, DIPLA1 and DIPAS, expressed in placenta tissue.</title>
        <authorList>
            <person name="Garcia J."/>
            <person name="Castrillo J.L."/>
        </authorList>
    </citation>
    <scope>NUCLEOTIDE SEQUENCE [MRNA]</scope>
    <scope>SUBCELLULAR LOCATION</scope>
    <scope>TISSUE SPECIFICITY</scope>
    <source>
        <tissue>Placenta</tissue>
    </source>
</reference>
<reference key="2">
    <citation type="journal article" date="2004" name="Nature">
        <title>DNA sequence and analysis of human chromosome 9.</title>
        <authorList>
            <person name="Humphray S.J."/>
            <person name="Oliver K."/>
            <person name="Hunt A.R."/>
            <person name="Plumb R.W."/>
            <person name="Loveland J.E."/>
            <person name="Howe K.L."/>
            <person name="Andrews T.D."/>
            <person name="Searle S."/>
            <person name="Hunt S.E."/>
            <person name="Scott C.E."/>
            <person name="Jones M.C."/>
            <person name="Ainscough R."/>
            <person name="Almeida J.P."/>
            <person name="Ambrose K.D."/>
            <person name="Ashwell R.I.S."/>
            <person name="Babbage A.K."/>
            <person name="Babbage S."/>
            <person name="Bagguley C.L."/>
            <person name="Bailey J."/>
            <person name="Banerjee R."/>
            <person name="Barker D.J."/>
            <person name="Barlow K.F."/>
            <person name="Bates K."/>
            <person name="Beasley H."/>
            <person name="Beasley O."/>
            <person name="Bird C.P."/>
            <person name="Bray-Allen S."/>
            <person name="Brown A.J."/>
            <person name="Brown J.Y."/>
            <person name="Burford D."/>
            <person name="Burrill W."/>
            <person name="Burton J."/>
            <person name="Carder C."/>
            <person name="Carter N.P."/>
            <person name="Chapman J.C."/>
            <person name="Chen Y."/>
            <person name="Clarke G."/>
            <person name="Clark S.Y."/>
            <person name="Clee C.M."/>
            <person name="Clegg S."/>
            <person name="Collier R.E."/>
            <person name="Corby N."/>
            <person name="Crosier M."/>
            <person name="Cummings A.T."/>
            <person name="Davies J."/>
            <person name="Dhami P."/>
            <person name="Dunn M."/>
            <person name="Dutta I."/>
            <person name="Dyer L.W."/>
            <person name="Earthrowl M.E."/>
            <person name="Faulkner L."/>
            <person name="Fleming C.J."/>
            <person name="Frankish A."/>
            <person name="Frankland J.A."/>
            <person name="French L."/>
            <person name="Fricker D.G."/>
            <person name="Garner P."/>
            <person name="Garnett J."/>
            <person name="Ghori J."/>
            <person name="Gilbert J.G.R."/>
            <person name="Glison C."/>
            <person name="Grafham D.V."/>
            <person name="Gribble S."/>
            <person name="Griffiths C."/>
            <person name="Griffiths-Jones S."/>
            <person name="Grocock R."/>
            <person name="Guy J."/>
            <person name="Hall R.E."/>
            <person name="Hammond S."/>
            <person name="Harley J.L."/>
            <person name="Harrison E.S.I."/>
            <person name="Hart E.A."/>
            <person name="Heath P.D."/>
            <person name="Henderson C.D."/>
            <person name="Hopkins B.L."/>
            <person name="Howard P.J."/>
            <person name="Howden P.J."/>
            <person name="Huckle E."/>
            <person name="Johnson C."/>
            <person name="Johnson D."/>
            <person name="Joy A.A."/>
            <person name="Kay M."/>
            <person name="Keenan S."/>
            <person name="Kershaw J.K."/>
            <person name="Kimberley A.M."/>
            <person name="King A."/>
            <person name="Knights A."/>
            <person name="Laird G.K."/>
            <person name="Langford C."/>
            <person name="Lawlor S."/>
            <person name="Leongamornlert D.A."/>
            <person name="Leversha M."/>
            <person name="Lloyd C."/>
            <person name="Lloyd D.M."/>
            <person name="Lovell J."/>
            <person name="Martin S."/>
            <person name="Mashreghi-Mohammadi M."/>
            <person name="Matthews L."/>
            <person name="McLaren S."/>
            <person name="McLay K.E."/>
            <person name="McMurray A."/>
            <person name="Milne S."/>
            <person name="Nickerson T."/>
            <person name="Nisbett J."/>
            <person name="Nordsiek G."/>
            <person name="Pearce A.V."/>
            <person name="Peck A.I."/>
            <person name="Porter K.M."/>
            <person name="Pandian R."/>
            <person name="Pelan S."/>
            <person name="Phillimore B."/>
            <person name="Povey S."/>
            <person name="Ramsey Y."/>
            <person name="Rand V."/>
            <person name="Scharfe M."/>
            <person name="Sehra H.K."/>
            <person name="Shownkeen R."/>
            <person name="Sims S.K."/>
            <person name="Skuce C.D."/>
            <person name="Smith M."/>
            <person name="Steward C.A."/>
            <person name="Swarbreck D."/>
            <person name="Sycamore N."/>
            <person name="Tester J."/>
            <person name="Thorpe A."/>
            <person name="Tracey A."/>
            <person name="Tromans A."/>
            <person name="Thomas D.W."/>
            <person name="Wall M."/>
            <person name="Wallis J.M."/>
            <person name="West A.P."/>
            <person name="Whitehead S.L."/>
            <person name="Willey D.L."/>
            <person name="Williams S.A."/>
            <person name="Wilming L."/>
            <person name="Wray P.W."/>
            <person name="Young L."/>
            <person name="Ashurst J.L."/>
            <person name="Coulson A."/>
            <person name="Blocker H."/>
            <person name="Durbin R.M."/>
            <person name="Sulston J.E."/>
            <person name="Hubbard T."/>
            <person name="Jackson M.J."/>
            <person name="Bentley D.R."/>
            <person name="Beck S."/>
            <person name="Rogers J."/>
            <person name="Dunham I."/>
        </authorList>
    </citation>
    <scope>NUCLEOTIDE SEQUENCE [LARGE SCALE GENOMIC DNA]</scope>
</reference>
<feature type="chain" id="PRO_0000314006" description="Protein PAPPAS">
    <location>
        <begin position="1"/>
        <end position="102"/>
    </location>
</feature>
<feature type="transmembrane region" description="Helical" evidence="1">
    <location>
        <begin position="13"/>
        <end position="33"/>
    </location>
</feature>
<feature type="transmembrane region" description="Helical" evidence="1">
    <location>
        <begin position="82"/>
        <end position="102"/>
    </location>
</feature>
<comment type="subcellular location">
    <subcellularLocation>
        <location evidence="3">Endoplasmic reticulum membrane</location>
        <topology evidence="3">Multi-pass membrane protein</topology>
    </subcellularLocation>
</comment>
<comment type="tissue specificity">
    <text evidence="2">Expressed in placenta with lower expression in brain, kidney and testis.</text>
</comment>
<comment type="caution">
    <text evidence="3">Product of a dubious CDS prediction. May be a non-coding RNA.</text>
</comment>
<keyword id="KW-0256">Endoplasmic reticulum</keyword>
<keyword id="KW-0472">Membrane</keyword>
<keyword id="KW-1185">Reference proteome</keyword>
<keyword id="KW-0812">Transmembrane</keyword>
<keyword id="KW-1133">Transmembrane helix</keyword>
<name>PAPAS_HUMAN</name>
<gene>
    <name type="primary">PAPPA-AS1</name>
    <name type="synonym">DIPAS</name>
    <name type="synonym">PAPPAS</name>
</gene>
<sequence>MRYGFVRKKHRGLFLTTVAALPIWNPISEFVKWYKSHKLSQHCIRICGHLCQKHLDMFLSVIGQRWPIDVFSSVFDHQVSAIGSDIIWWFLKLFLVSFFFFF</sequence>
<dbReference type="EMBL" id="AY623011">
    <property type="protein sequence ID" value="AAV41519.1"/>
    <property type="molecule type" value="mRNA"/>
</dbReference>
<dbReference type="EMBL" id="AL137024">
    <property type="status" value="NOT_ANNOTATED_CDS"/>
    <property type="molecule type" value="Genomic_DNA"/>
</dbReference>
<dbReference type="BioMuta" id="HGNC:35152"/>
<dbReference type="Pumba" id="Q5QFB9"/>
<dbReference type="AGR" id="HGNC:35152"/>
<dbReference type="GeneCards" id="PAPPA-AS1"/>
<dbReference type="HGNC" id="HGNC:35152">
    <property type="gene designation" value="PAPPA-AS1"/>
</dbReference>
<dbReference type="MIM" id="610689">
    <property type="type" value="gene"/>
</dbReference>
<dbReference type="neXtProt" id="NX_Q5QFB9"/>
<dbReference type="InParanoid" id="Q5QFB9"/>
<dbReference type="PAN-GO" id="Q5QFB9">
    <property type="GO annotations" value="0 GO annotations based on evolutionary models"/>
</dbReference>
<dbReference type="PhylomeDB" id="Q5QFB9"/>
<dbReference type="PathwayCommons" id="Q5QFB9"/>
<dbReference type="ChiTaRS" id="PAPPA-AS1">
    <property type="organism name" value="human"/>
</dbReference>
<dbReference type="Pharos" id="Q5QFB9">
    <property type="development level" value="Tdark"/>
</dbReference>
<dbReference type="PRO" id="PR:Q5QFB9"/>
<dbReference type="Proteomes" id="UP000005640">
    <property type="component" value="Unplaced"/>
</dbReference>
<dbReference type="RNAct" id="Q5QFB9">
    <property type="molecule type" value="protein"/>
</dbReference>
<dbReference type="GO" id="GO:0005789">
    <property type="term" value="C:endoplasmic reticulum membrane"/>
    <property type="evidence" value="ECO:0007669"/>
    <property type="project" value="UniProtKB-SubCell"/>
</dbReference>
<accession>Q5QFB9</accession>
<protein>
    <recommendedName>
        <fullName>Protein PAPPAS</fullName>
    </recommendedName>
    <alternativeName>
        <fullName>DIPLA1 antisense RNA 1</fullName>
    </alternativeName>
    <alternativeName>
        <fullName>DIPLA1 antisense gene protein 1</fullName>
    </alternativeName>
    <alternativeName>
        <fullName>DIPLA1-antisense expressed</fullName>
    </alternativeName>
    <alternativeName>
        <fullName>PAPPAS antisense RNA 1</fullName>
    </alternativeName>
    <alternativeName>
        <fullName>PAPPAS antisense gene protein 1</fullName>
    </alternativeName>
    <alternativeName>
        <fullName>PAPPAS-antisense expressed</fullName>
    </alternativeName>
</protein>
<evidence type="ECO:0000255" key="1"/>
<evidence type="ECO:0000269" key="2">
    <source>
    </source>
</evidence>
<evidence type="ECO:0000305" key="3"/>
<proteinExistence type="uncertain"/>
<organism>
    <name type="scientific">Homo sapiens</name>
    <name type="common">Human</name>
    <dbReference type="NCBI Taxonomy" id="9606"/>
    <lineage>
        <taxon>Eukaryota</taxon>
        <taxon>Metazoa</taxon>
        <taxon>Chordata</taxon>
        <taxon>Craniata</taxon>
        <taxon>Vertebrata</taxon>
        <taxon>Euteleostomi</taxon>
        <taxon>Mammalia</taxon>
        <taxon>Eutheria</taxon>
        <taxon>Euarchontoglires</taxon>
        <taxon>Primates</taxon>
        <taxon>Haplorrhini</taxon>
        <taxon>Catarrhini</taxon>
        <taxon>Hominidae</taxon>
        <taxon>Homo</taxon>
    </lineage>
</organism>